<accession>Q1REG3</accession>
<proteinExistence type="inferred from homology"/>
<comment type="function">
    <text evidence="1">Catalyzes the hydrolysis of 6-phosphogluconolactone to 6-phosphogluconate.</text>
</comment>
<comment type="catalytic activity">
    <reaction evidence="1">
        <text>6-phospho-D-glucono-1,5-lactone + H2O = 6-phospho-D-gluconate + H(+)</text>
        <dbReference type="Rhea" id="RHEA:12556"/>
        <dbReference type="ChEBI" id="CHEBI:15377"/>
        <dbReference type="ChEBI" id="CHEBI:15378"/>
        <dbReference type="ChEBI" id="CHEBI:57955"/>
        <dbReference type="ChEBI" id="CHEBI:58759"/>
        <dbReference type="EC" id="3.1.1.31"/>
    </reaction>
</comment>
<comment type="pathway">
    <text evidence="1">Carbohydrate degradation; pentose phosphate pathway; D-ribulose 5-phosphate from D-glucose 6-phosphate (oxidative stage): step 2/3.</text>
</comment>
<comment type="similarity">
    <text evidence="1">Belongs to the cycloisomerase 2 family.</text>
</comment>
<organism>
    <name type="scientific">Escherichia coli (strain UTI89 / UPEC)</name>
    <dbReference type="NCBI Taxonomy" id="364106"/>
    <lineage>
        <taxon>Bacteria</taxon>
        <taxon>Pseudomonadati</taxon>
        <taxon>Pseudomonadota</taxon>
        <taxon>Gammaproteobacteria</taxon>
        <taxon>Enterobacterales</taxon>
        <taxon>Enterobacteriaceae</taxon>
        <taxon>Escherichia</taxon>
    </lineage>
</organism>
<protein>
    <recommendedName>
        <fullName evidence="1">6-phosphogluconolactonase</fullName>
        <shortName evidence="1">6-P-gluconolactonase</shortName>
        <ecNumber evidence="1">3.1.1.31</ecNumber>
    </recommendedName>
</protein>
<gene>
    <name evidence="1" type="primary">pgl</name>
    <name type="ordered locus">UTI89_C0765</name>
</gene>
<feature type="chain" id="PRO_0000291465" description="6-phosphogluconolactonase">
    <location>
        <begin position="1"/>
        <end position="331"/>
    </location>
</feature>
<feature type="modified residue" description="N6-acetyllysine" evidence="1">
    <location>
        <position position="287"/>
    </location>
</feature>
<reference key="1">
    <citation type="journal article" date="2006" name="Proc. Natl. Acad. Sci. U.S.A.">
        <title>Identification of genes subject to positive selection in uropathogenic strains of Escherichia coli: a comparative genomics approach.</title>
        <authorList>
            <person name="Chen S.L."/>
            <person name="Hung C.-S."/>
            <person name="Xu J."/>
            <person name="Reigstad C.S."/>
            <person name="Magrini V."/>
            <person name="Sabo A."/>
            <person name="Blasiar D."/>
            <person name="Bieri T."/>
            <person name="Meyer R.R."/>
            <person name="Ozersky P."/>
            <person name="Armstrong J.R."/>
            <person name="Fulton R.S."/>
            <person name="Latreille J.P."/>
            <person name="Spieth J."/>
            <person name="Hooton T.M."/>
            <person name="Mardis E.R."/>
            <person name="Hultgren S.J."/>
            <person name="Gordon J.I."/>
        </authorList>
    </citation>
    <scope>NUCLEOTIDE SEQUENCE [LARGE SCALE GENOMIC DNA]</scope>
    <source>
        <strain>UTI89 / UPEC</strain>
    </source>
</reference>
<dbReference type="EC" id="3.1.1.31" evidence="1"/>
<dbReference type="EMBL" id="CP000243">
    <property type="protein sequence ID" value="ABE06251.1"/>
    <property type="molecule type" value="Genomic_DNA"/>
</dbReference>
<dbReference type="RefSeq" id="WP_000815414.1">
    <property type="nucleotide sequence ID" value="NZ_CP064825.1"/>
</dbReference>
<dbReference type="SMR" id="Q1REG3"/>
<dbReference type="KEGG" id="eci:UTI89_C0765"/>
<dbReference type="HOGENOM" id="CLU_038716_2_0_6"/>
<dbReference type="UniPathway" id="UPA00115">
    <property type="reaction ID" value="UER00409"/>
</dbReference>
<dbReference type="Proteomes" id="UP000001952">
    <property type="component" value="Chromosome"/>
</dbReference>
<dbReference type="GO" id="GO:0005829">
    <property type="term" value="C:cytosol"/>
    <property type="evidence" value="ECO:0007669"/>
    <property type="project" value="TreeGrafter"/>
</dbReference>
<dbReference type="GO" id="GO:0017057">
    <property type="term" value="F:6-phosphogluconolactonase activity"/>
    <property type="evidence" value="ECO:0007669"/>
    <property type="project" value="UniProtKB-UniRule"/>
</dbReference>
<dbReference type="GO" id="GO:0006006">
    <property type="term" value="P:glucose metabolic process"/>
    <property type="evidence" value="ECO:0007669"/>
    <property type="project" value="UniProtKB-KW"/>
</dbReference>
<dbReference type="GO" id="GO:0009051">
    <property type="term" value="P:pentose-phosphate shunt, oxidative branch"/>
    <property type="evidence" value="ECO:0007669"/>
    <property type="project" value="UniProtKB-UniRule"/>
</dbReference>
<dbReference type="FunFam" id="2.130.10.10:FF:000051">
    <property type="entry name" value="6-phosphogluconolactonase"/>
    <property type="match status" value="1"/>
</dbReference>
<dbReference type="Gene3D" id="2.130.10.10">
    <property type="entry name" value="YVTN repeat-like/Quinoprotein amine dehydrogenase"/>
    <property type="match status" value="1"/>
</dbReference>
<dbReference type="HAMAP" id="MF_01605">
    <property type="entry name" value="6P_gluconolactonase"/>
    <property type="match status" value="1"/>
</dbReference>
<dbReference type="InterPro" id="IPR022528">
    <property type="entry name" value="6-phosphogluconolactonase_YbhE"/>
</dbReference>
<dbReference type="InterPro" id="IPR050282">
    <property type="entry name" value="Cycloisomerase_2"/>
</dbReference>
<dbReference type="InterPro" id="IPR019405">
    <property type="entry name" value="Lactonase_7-beta_prop"/>
</dbReference>
<dbReference type="InterPro" id="IPR011045">
    <property type="entry name" value="N2O_reductase_N"/>
</dbReference>
<dbReference type="InterPro" id="IPR015943">
    <property type="entry name" value="WD40/YVTN_repeat-like_dom_sf"/>
</dbReference>
<dbReference type="NCBIfam" id="NF008258">
    <property type="entry name" value="PRK11028.1"/>
    <property type="match status" value="1"/>
</dbReference>
<dbReference type="PANTHER" id="PTHR30344:SF1">
    <property type="entry name" value="6-PHOSPHOGLUCONOLACTONASE"/>
    <property type="match status" value="1"/>
</dbReference>
<dbReference type="PANTHER" id="PTHR30344">
    <property type="entry name" value="6-PHOSPHOGLUCONOLACTONASE-RELATED"/>
    <property type="match status" value="1"/>
</dbReference>
<dbReference type="Pfam" id="PF10282">
    <property type="entry name" value="Lactonase"/>
    <property type="match status" value="1"/>
</dbReference>
<dbReference type="SUPFAM" id="SSF50974">
    <property type="entry name" value="Nitrous oxide reductase, N-terminal domain"/>
    <property type="match status" value="1"/>
</dbReference>
<sequence>MKQTVYIASPESQQIHVWNLNHEGALTLTQVVDVPGQVQPMVVSPDKRYLYVGVRPEFRVLAYRIAPDDGALTFAAESALPGSPTHISTDHLGQFVFVGSYNAGNVSVTRLEDGLPVGVVDVVEGLDGCHSANISPDNRTLWVPALKQDRICLFTVSDDGHLVAQDPAEVTTVEGAGPRHMVFHPNEQYAYCVNELNSSVDVWELKDPHGNIECVQTLDMMPENFSDTRWAADIHITPDGRHLYACDRTASLITVFSVSEDGSVLSKEGFQPTETQPRGFNVDHSGKYLIAAGQKSHHISVYEIVGEQGLLHEKGRYAVGQGPMWVVVNAH</sequence>
<keyword id="KW-0007">Acetylation</keyword>
<keyword id="KW-0119">Carbohydrate metabolism</keyword>
<keyword id="KW-0313">Glucose metabolism</keyword>
<keyword id="KW-0378">Hydrolase</keyword>
<evidence type="ECO:0000255" key="1">
    <source>
        <dbReference type="HAMAP-Rule" id="MF_01605"/>
    </source>
</evidence>
<name>6PGL_ECOUT</name>